<proteinExistence type="inferred from homology"/>
<keyword id="KW-0342">GTP-binding</keyword>
<keyword id="KW-0547">Nucleotide-binding</keyword>
<keyword id="KW-1185">Reference proteome</keyword>
<keyword id="KW-0677">Repeat</keyword>
<keyword id="KW-0690">Ribosome biogenesis</keyword>
<organism>
    <name type="scientific">Burkholderia pseudomallei (strain K96243)</name>
    <dbReference type="NCBI Taxonomy" id="272560"/>
    <lineage>
        <taxon>Bacteria</taxon>
        <taxon>Pseudomonadati</taxon>
        <taxon>Pseudomonadota</taxon>
        <taxon>Betaproteobacteria</taxon>
        <taxon>Burkholderiales</taxon>
        <taxon>Burkholderiaceae</taxon>
        <taxon>Burkholderia</taxon>
        <taxon>pseudomallei group</taxon>
    </lineage>
</organism>
<comment type="function">
    <text evidence="1">GTPase that plays an essential role in the late steps of ribosome biogenesis.</text>
</comment>
<comment type="subunit">
    <text evidence="1">Associates with the 50S ribosomal subunit.</text>
</comment>
<comment type="similarity">
    <text evidence="1">Belongs to the TRAFAC class TrmE-Era-EngA-EngB-Septin-like GTPase superfamily. EngA (Der) GTPase family.</text>
</comment>
<gene>
    <name evidence="1" type="primary">der</name>
    <name type="synonym">engA</name>
    <name type="ordered locus">BPSL1517</name>
</gene>
<accession>Q63US9</accession>
<evidence type="ECO:0000255" key="1">
    <source>
        <dbReference type="HAMAP-Rule" id="MF_00195"/>
    </source>
</evidence>
<feature type="chain" id="PRO_1000011585" description="GTPase Der">
    <location>
        <begin position="1"/>
        <end position="445"/>
    </location>
</feature>
<feature type="domain" description="EngA-type G 1">
    <location>
        <begin position="3"/>
        <end position="167"/>
    </location>
</feature>
<feature type="domain" description="EngA-type G 2">
    <location>
        <begin position="180"/>
        <end position="353"/>
    </location>
</feature>
<feature type="domain" description="KH-like" evidence="1">
    <location>
        <begin position="354"/>
        <end position="438"/>
    </location>
</feature>
<feature type="binding site" evidence="1">
    <location>
        <begin position="9"/>
        <end position="16"/>
    </location>
    <ligand>
        <name>GTP</name>
        <dbReference type="ChEBI" id="CHEBI:37565"/>
        <label>1</label>
    </ligand>
</feature>
<feature type="binding site" evidence="1">
    <location>
        <begin position="56"/>
        <end position="60"/>
    </location>
    <ligand>
        <name>GTP</name>
        <dbReference type="ChEBI" id="CHEBI:37565"/>
        <label>1</label>
    </ligand>
</feature>
<feature type="binding site" evidence="1">
    <location>
        <begin position="119"/>
        <end position="122"/>
    </location>
    <ligand>
        <name>GTP</name>
        <dbReference type="ChEBI" id="CHEBI:37565"/>
        <label>1</label>
    </ligand>
</feature>
<feature type="binding site" evidence="1">
    <location>
        <begin position="186"/>
        <end position="193"/>
    </location>
    <ligand>
        <name>GTP</name>
        <dbReference type="ChEBI" id="CHEBI:37565"/>
        <label>2</label>
    </ligand>
</feature>
<feature type="binding site" evidence="1">
    <location>
        <begin position="233"/>
        <end position="237"/>
    </location>
    <ligand>
        <name>GTP</name>
        <dbReference type="ChEBI" id="CHEBI:37565"/>
        <label>2</label>
    </ligand>
</feature>
<feature type="binding site" evidence="1">
    <location>
        <begin position="298"/>
        <end position="301"/>
    </location>
    <ligand>
        <name>GTP</name>
        <dbReference type="ChEBI" id="CHEBI:37565"/>
        <label>2</label>
    </ligand>
</feature>
<reference key="1">
    <citation type="journal article" date="2004" name="Proc. Natl. Acad. Sci. U.S.A.">
        <title>Genomic plasticity of the causative agent of melioidosis, Burkholderia pseudomallei.</title>
        <authorList>
            <person name="Holden M.T.G."/>
            <person name="Titball R.W."/>
            <person name="Peacock S.J."/>
            <person name="Cerdeno-Tarraga A.-M."/>
            <person name="Atkins T."/>
            <person name="Crossman L.C."/>
            <person name="Pitt T."/>
            <person name="Churcher C."/>
            <person name="Mungall K.L."/>
            <person name="Bentley S.D."/>
            <person name="Sebaihia M."/>
            <person name="Thomson N.R."/>
            <person name="Bason N."/>
            <person name="Beacham I.R."/>
            <person name="Brooks K."/>
            <person name="Brown K.A."/>
            <person name="Brown N.F."/>
            <person name="Challis G.L."/>
            <person name="Cherevach I."/>
            <person name="Chillingworth T."/>
            <person name="Cronin A."/>
            <person name="Crossett B."/>
            <person name="Davis P."/>
            <person name="DeShazer D."/>
            <person name="Feltwell T."/>
            <person name="Fraser A."/>
            <person name="Hance Z."/>
            <person name="Hauser H."/>
            <person name="Holroyd S."/>
            <person name="Jagels K."/>
            <person name="Keith K.E."/>
            <person name="Maddison M."/>
            <person name="Moule S."/>
            <person name="Price C."/>
            <person name="Quail M.A."/>
            <person name="Rabbinowitsch E."/>
            <person name="Rutherford K."/>
            <person name="Sanders M."/>
            <person name="Simmonds M."/>
            <person name="Songsivilai S."/>
            <person name="Stevens K."/>
            <person name="Tumapa S."/>
            <person name="Vesaratchavest M."/>
            <person name="Whitehead S."/>
            <person name="Yeats C."/>
            <person name="Barrell B.G."/>
            <person name="Oyston P.C.F."/>
            <person name="Parkhill J."/>
        </authorList>
    </citation>
    <scope>NUCLEOTIDE SEQUENCE [LARGE SCALE GENOMIC DNA]</scope>
    <source>
        <strain>K96243</strain>
    </source>
</reference>
<name>DER_BURPS</name>
<dbReference type="EMBL" id="BX571965">
    <property type="protein sequence ID" value="CAH35518.1"/>
    <property type="molecule type" value="Genomic_DNA"/>
</dbReference>
<dbReference type="RefSeq" id="WP_004192452.1">
    <property type="nucleotide sequence ID" value="NZ_CP009538.1"/>
</dbReference>
<dbReference type="RefSeq" id="YP_108137.1">
    <property type="nucleotide sequence ID" value="NC_006350.1"/>
</dbReference>
<dbReference type="SMR" id="Q63US9"/>
<dbReference type="STRING" id="272560.BPSL1517"/>
<dbReference type="GeneID" id="93060472"/>
<dbReference type="KEGG" id="bps:BPSL1517"/>
<dbReference type="PATRIC" id="fig|272560.51.peg.3555"/>
<dbReference type="eggNOG" id="COG1160">
    <property type="taxonomic scope" value="Bacteria"/>
</dbReference>
<dbReference type="Proteomes" id="UP000000605">
    <property type="component" value="Chromosome 1"/>
</dbReference>
<dbReference type="GO" id="GO:0016887">
    <property type="term" value="F:ATP hydrolysis activity"/>
    <property type="evidence" value="ECO:0007669"/>
    <property type="project" value="InterPro"/>
</dbReference>
<dbReference type="GO" id="GO:0005525">
    <property type="term" value="F:GTP binding"/>
    <property type="evidence" value="ECO:0007669"/>
    <property type="project" value="UniProtKB-UniRule"/>
</dbReference>
<dbReference type="GO" id="GO:0043022">
    <property type="term" value="F:ribosome binding"/>
    <property type="evidence" value="ECO:0007669"/>
    <property type="project" value="TreeGrafter"/>
</dbReference>
<dbReference type="GO" id="GO:0042254">
    <property type="term" value="P:ribosome biogenesis"/>
    <property type="evidence" value="ECO:0007669"/>
    <property type="project" value="UniProtKB-KW"/>
</dbReference>
<dbReference type="CDD" id="cd01894">
    <property type="entry name" value="EngA1"/>
    <property type="match status" value="1"/>
</dbReference>
<dbReference type="CDD" id="cd01895">
    <property type="entry name" value="EngA2"/>
    <property type="match status" value="1"/>
</dbReference>
<dbReference type="FunFam" id="3.30.300.20:FF:000004">
    <property type="entry name" value="GTPase Der"/>
    <property type="match status" value="1"/>
</dbReference>
<dbReference type="FunFam" id="3.40.50.300:FF:000040">
    <property type="entry name" value="GTPase Der"/>
    <property type="match status" value="1"/>
</dbReference>
<dbReference type="FunFam" id="3.40.50.300:FF:000057">
    <property type="entry name" value="GTPase Der"/>
    <property type="match status" value="1"/>
</dbReference>
<dbReference type="Gene3D" id="3.30.300.20">
    <property type="match status" value="1"/>
</dbReference>
<dbReference type="Gene3D" id="3.40.50.300">
    <property type="entry name" value="P-loop containing nucleotide triphosphate hydrolases"/>
    <property type="match status" value="2"/>
</dbReference>
<dbReference type="HAMAP" id="MF_00195">
    <property type="entry name" value="GTPase_Der"/>
    <property type="match status" value="1"/>
</dbReference>
<dbReference type="InterPro" id="IPR003593">
    <property type="entry name" value="AAA+_ATPase"/>
</dbReference>
<dbReference type="InterPro" id="IPR031166">
    <property type="entry name" value="G_ENGA"/>
</dbReference>
<dbReference type="InterPro" id="IPR006073">
    <property type="entry name" value="GTP-bd"/>
</dbReference>
<dbReference type="InterPro" id="IPR016484">
    <property type="entry name" value="GTPase_Der"/>
</dbReference>
<dbReference type="InterPro" id="IPR032859">
    <property type="entry name" value="KH_dom-like"/>
</dbReference>
<dbReference type="InterPro" id="IPR015946">
    <property type="entry name" value="KH_dom-like_a/b"/>
</dbReference>
<dbReference type="InterPro" id="IPR027417">
    <property type="entry name" value="P-loop_NTPase"/>
</dbReference>
<dbReference type="InterPro" id="IPR005225">
    <property type="entry name" value="Small_GTP-bd"/>
</dbReference>
<dbReference type="NCBIfam" id="TIGR03594">
    <property type="entry name" value="GTPase_EngA"/>
    <property type="match status" value="1"/>
</dbReference>
<dbReference type="NCBIfam" id="TIGR00231">
    <property type="entry name" value="small_GTP"/>
    <property type="match status" value="2"/>
</dbReference>
<dbReference type="PANTHER" id="PTHR43834">
    <property type="entry name" value="GTPASE DER"/>
    <property type="match status" value="1"/>
</dbReference>
<dbReference type="PANTHER" id="PTHR43834:SF6">
    <property type="entry name" value="GTPASE DER"/>
    <property type="match status" value="1"/>
</dbReference>
<dbReference type="Pfam" id="PF14714">
    <property type="entry name" value="KH_dom-like"/>
    <property type="match status" value="1"/>
</dbReference>
<dbReference type="Pfam" id="PF01926">
    <property type="entry name" value="MMR_HSR1"/>
    <property type="match status" value="2"/>
</dbReference>
<dbReference type="PIRSF" id="PIRSF006485">
    <property type="entry name" value="GTP-binding_EngA"/>
    <property type="match status" value="1"/>
</dbReference>
<dbReference type="PRINTS" id="PR00326">
    <property type="entry name" value="GTP1OBG"/>
</dbReference>
<dbReference type="SMART" id="SM00382">
    <property type="entry name" value="AAA"/>
    <property type="match status" value="2"/>
</dbReference>
<dbReference type="SUPFAM" id="SSF52540">
    <property type="entry name" value="P-loop containing nucleoside triphosphate hydrolases"/>
    <property type="match status" value="2"/>
</dbReference>
<dbReference type="PROSITE" id="PS51712">
    <property type="entry name" value="G_ENGA"/>
    <property type="match status" value="2"/>
</dbReference>
<sequence>MKPVIALVGRPNVGKSTLFNRLTRSRDALVADLPGLTRDRHYGEGRVGARPYLVVDTGGFEPVAKDGILHEMARQTRQAVEEADVVVFIVDGRNGLAPQDKSIADYLRKTGRPIFLVVNKAEGMKYTAVASDFYELGLGDPRAISAAHGDGVNDMINEALEVAYAGEPQESEEAAAARGIKIAIVGRPNVGKSTLVNTLIGEDRVIAFDMPGTTRDSIYVDFERNGKHYTLIDTAGLRRRGKVFEAIEKFSVVKTLQSISDANVVILLLDARQDISDQDAHIAGFVVEQGRALVVGVNKWDGLDPHVRERTKADLARKLKFLEFAKFHFISAAEKTGIGALMRSVDDAYAAAMKKLPTPKLTRALIEAVEFQQPRRRGPVRPKLRYAHQGGQNPPIIVIHGNALDAVTETYKRYLENRFRETFSLTGTPLRIEFRSSTNPYADKD</sequence>
<protein>
    <recommendedName>
        <fullName evidence="1">GTPase Der</fullName>
    </recommendedName>
    <alternativeName>
        <fullName evidence="1">GTP-binding protein EngA</fullName>
    </alternativeName>
</protein>